<accession>Q71WE9</accession>
<feature type="chain" id="PRO_0000129576" description="Large ribosomal subunit protein uL2">
    <location>
        <begin position="1"/>
        <end position="277"/>
    </location>
</feature>
<feature type="region of interest" description="Disordered" evidence="2">
    <location>
        <begin position="24"/>
        <end position="55"/>
    </location>
</feature>
<feature type="region of interest" description="Disordered" evidence="2">
    <location>
        <begin position="221"/>
        <end position="277"/>
    </location>
</feature>
<evidence type="ECO:0000255" key="1">
    <source>
        <dbReference type="HAMAP-Rule" id="MF_01320"/>
    </source>
</evidence>
<evidence type="ECO:0000256" key="2">
    <source>
        <dbReference type="SAM" id="MobiDB-lite"/>
    </source>
</evidence>
<evidence type="ECO:0000305" key="3"/>
<comment type="function">
    <text evidence="1">One of the primary rRNA binding proteins. Required for association of the 30S and 50S subunits to form the 70S ribosome, for tRNA binding and peptide bond formation. It has been suggested to have peptidyltransferase activity; this is somewhat controversial. Makes several contacts with the 16S rRNA in the 70S ribosome.</text>
</comment>
<comment type="subunit">
    <text evidence="1">Part of the 50S ribosomal subunit. Forms a bridge to the 30S subunit in the 70S ribosome.</text>
</comment>
<comment type="similarity">
    <text evidence="1">Belongs to the universal ribosomal protein uL2 family.</text>
</comment>
<keyword id="KW-0687">Ribonucleoprotein</keyword>
<keyword id="KW-0689">Ribosomal protein</keyword>
<keyword id="KW-0694">RNA-binding</keyword>
<keyword id="KW-0699">rRNA-binding</keyword>
<proteinExistence type="inferred from homology"/>
<gene>
    <name evidence="1" type="primary">rplB</name>
    <name type="ordered locus">LMOf2365_2602</name>
</gene>
<organism>
    <name type="scientific">Listeria monocytogenes serotype 4b (strain F2365)</name>
    <dbReference type="NCBI Taxonomy" id="265669"/>
    <lineage>
        <taxon>Bacteria</taxon>
        <taxon>Bacillati</taxon>
        <taxon>Bacillota</taxon>
        <taxon>Bacilli</taxon>
        <taxon>Bacillales</taxon>
        <taxon>Listeriaceae</taxon>
        <taxon>Listeria</taxon>
    </lineage>
</organism>
<name>RL2_LISMF</name>
<dbReference type="EMBL" id="AE017262">
    <property type="protein sequence ID" value="AAT05367.1"/>
    <property type="molecule type" value="Genomic_DNA"/>
</dbReference>
<dbReference type="RefSeq" id="WP_003727696.1">
    <property type="nucleotide sequence ID" value="NC_002973.6"/>
</dbReference>
<dbReference type="SMR" id="Q71WE9"/>
<dbReference type="GeneID" id="93236051"/>
<dbReference type="KEGG" id="lmf:LMOf2365_2602"/>
<dbReference type="HOGENOM" id="CLU_036235_2_1_9"/>
<dbReference type="GO" id="GO:0015934">
    <property type="term" value="C:large ribosomal subunit"/>
    <property type="evidence" value="ECO:0007669"/>
    <property type="project" value="InterPro"/>
</dbReference>
<dbReference type="GO" id="GO:0019843">
    <property type="term" value="F:rRNA binding"/>
    <property type="evidence" value="ECO:0007669"/>
    <property type="project" value="UniProtKB-UniRule"/>
</dbReference>
<dbReference type="GO" id="GO:0003735">
    <property type="term" value="F:structural constituent of ribosome"/>
    <property type="evidence" value="ECO:0007669"/>
    <property type="project" value="InterPro"/>
</dbReference>
<dbReference type="GO" id="GO:0016740">
    <property type="term" value="F:transferase activity"/>
    <property type="evidence" value="ECO:0007669"/>
    <property type="project" value="InterPro"/>
</dbReference>
<dbReference type="GO" id="GO:0002181">
    <property type="term" value="P:cytoplasmic translation"/>
    <property type="evidence" value="ECO:0007669"/>
    <property type="project" value="TreeGrafter"/>
</dbReference>
<dbReference type="FunFam" id="2.30.30.30:FF:000001">
    <property type="entry name" value="50S ribosomal protein L2"/>
    <property type="match status" value="1"/>
</dbReference>
<dbReference type="FunFam" id="2.40.50.140:FF:000003">
    <property type="entry name" value="50S ribosomal protein L2"/>
    <property type="match status" value="1"/>
</dbReference>
<dbReference type="FunFam" id="4.10.950.10:FF:000001">
    <property type="entry name" value="50S ribosomal protein L2"/>
    <property type="match status" value="1"/>
</dbReference>
<dbReference type="Gene3D" id="2.30.30.30">
    <property type="match status" value="1"/>
</dbReference>
<dbReference type="Gene3D" id="2.40.50.140">
    <property type="entry name" value="Nucleic acid-binding proteins"/>
    <property type="match status" value="1"/>
</dbReference>
<dbReference type="Gene3D" id="4.10.950.10">
    <property type="entry name" value="Ribosomal protein L2, domain 3"/>
    <property type="match status" value="1"/>
</dbReference>
<dbReference type="HAMAP" id="MF_01320_B">
    <property type="entry name" value="Ribosomal_uL2_B"/>
    <property type="match status" value="1"/>
</dbReference>
<dbReference type="InterPro" id="IPR012340">
    <property type="entry name" value="NA-bd_OB-fold"/>
</dbReference>
<dbReference type="InterPro" id="IPR014722">
    <property type="entry name" value="Rib_uL2_dom2"/>
</dbReference>
<dbReference type="InterPro" id="IPR002171">
    <property type="entry name" value="Ribosomal_uL2"/>
</dbReference>
<dbReference type="InterPro" id="IPR005880">
    <property type="entry name" value="Ribosomal_uL2_bac/org-type"/>
</dbReference>
<dbReference type="InterPro" id="IPR022669">
    <property type="entry name" value="Ribosomal_uL2_C"/>
</dbReference>
<dbReference type="InterPro" id="IPR022671">
    <property type="entry name" value="Ribosomal_uL2_CS"/>
</dbReference>
<dbReference type="InterPro" id="IPR014726">
    <property type="entry name" value="Ribosomal_uL2_dom3"/>
</dbReference>
<dbReference type="InterPro" id="IPR022666">
    <property type="entry name" value="Ribosomal_uL2_RNA-bd_dom"/>
</dbReference>
<dbReference type="InterPro" id="IPR008991">
    <property type="entry name" value="Translation_prot_SH3-like_sf"/>
</dbReference>
<dbReference type="NCBIfam" id="TIGR01171">
    <property type="entry name" value="rplB_bact"/>
    <property type="match status" value="1"/>
</dbReference>
<dbReference type="PANTHER" id="PTHR13691:SF5">
    <property type="entry name" value="LARGE RIBOSOMAL SUBUNIT PROTEIN UL2M"/>
    <property type="match status" value="1"/>
</dbReference>
<dbReference type="PANTHER" id="PTHR13691">
    <property type="entry name" value="RIBOSOMAL PROTEIN L2"/>
    <property type="match status" value="1"/>
</dbReference>
<dbReference type="Pfam" id="PF00181">
    <property type="entry name" value="Ribosomal_L2"/>
    <property type="match status" value="1"/>
</dbReference>
<dbReference type="Pfam" id="PF03947">
    <property type="entry name" value="Ribosomal_L2_C"/>
    <property type="match status" value="1"/>
</dbReference>
<dbReference type="PIRSF" id="PIRSF002158">
    <property type="entry name" value="Ribosomal_L2"/>
    <property type="match status" value="1"/>
</dbReference>
<dbReference type="SMART" id="SM01383">
    <property type="entry name" value="Ribosomal_L2"/>
    <property type="match status" value="1"/>
</dbReference>
<dbReference type="SMART" id="SM01382">
    <property type="entry name" value="Ribosomal_L2_C"/>
    <property type="match status" value="1"/>
</dbReference>
<dbReference type="SUPFAM" id="SSF50249">
    <property type="entry name" value="Nucleic acid-binding proteins"/>
    <property type="match status" value="1"/>
</dbReference>
<dbReference type="SUPFAM" id="SSF50104">
    <property type="entry name" value="Translation proteins SH3-like domain"/>
    <property type="match status" value="1"/>
</dbReference>
<dbReference type="PROSITE" id="PS00467">
    <property type="entry name" value="RIBOSOMAL_L2"/>
    <property type="match status" value="1"/>
</dbReference>
<protein>
    <recommendedName>
        <fullName evidence="1">Large ribosomal subunit protein uL2</fullName>
    </recommendedName>
    <alternativeName>
        <fullName evidence="3">50S ribosomal protein L2</fullName>
    </alternativeName>
</protein>
<sequence length="277" mass="30505">MAIKKYKPTTNGRRHMTSSDFAEITTSTPEKSLLRPLKKKAGRNNQGKLTVRHHGGGHKRQYRVIDFKRNKDGIPGRVATIEYDPNRSANIALINYADGEKRYIIAAKGLEVGQTIYSGAEADIKVGNALELKDIPVGTVIHNIEMKPGKGGQLVRSAGTSAQVLGKEGKYVLIRLNSGEVRMILATCRATIGQVGNEQHELINIGKAGRSRWMGKRPTVRGSVMNPNDHPHGGGEGKAPIGRKSPMSPWGKPTLGYKTRKKNNNSDKFIVRRRKKK</sequence>
<reference key="1">
    <citation type="journal article" date="2004" name="Nucleic Acids Res.">
        <title>Whole genome comparisons of serotype 4b and 1/2a strains of the food-borne pathogen Listeria monocytogenes reveal new insights into the core genome components of this species.</title>
        <authorList>
            <person name="Nelson K.E."/>
            <person name="Fouts D.E."/>
            <person name="Mongodin E.F."/>
            <person name="Ravel J."/>
            <person name="DeBoy R.T."/>
            <person name="Kolonay J.F."/>
            <person name="Rasko D.A."/>
            <person name="Angiuoli S.V."/>
            <person name="Gill S.R."/>
            <person name="Paulsen I.T."/>
            <person name="Peterson J.D."/>
            <person name="White O."/>
            <person name="Nelson W.C."/>
            <person name="Nierman W.C."/>
            <person name="Beanan M.J."/>
            <person name="Brinkac L.M."/>
            <person name="Daugherty S.C."/>
            <person name="Dodson R.J."/>
            <person name="Durkin A.S."/>
            <person name="Madupu R."/>
            <person name="Haft D.H."/>
            <person name="Selengut J."/>
            <person name="Van Aken S.E."/>
            <person name="Khouri H.M."/>
            <person name="Fedorova N."/>
            <person name="Forberger H.A."/>
            <person name="Tran B."/>
            <person name="Kathariou S."/>
            <person name="Wonderling L.D."/>
            <person name="Uhlich G.A."/>
            <person name="Bayles D.O."/>
            <person name="Luchansky J.B."/>
            <person name="Fraser C.M."/>
        </authorList>
    </citation>
    <scope>NUCLEOTIDE SEQUENCE [LARGE SCALE GENOMIC DNA]</scope>
    <source>
        <strain>F2365</strain>
    </source>
</reference>